<reference key="1">
    <citation type="journal article" date="2010" name="PLoS ONE">
        <title>Genome sequence of Cronobacter sakazakii BAA-894 and comparative genomic hybridization analysis with other Cronobacter species.</title>
        <authorList>
            <person name="Kucerova E."/>
            <person name="Clifton S.W."/>
            <person name="Xia X.Q."/>
            <person name="Long F."/>
            <person name="Porwollik S."/>
            <person name="Fulton L."/>
            <person name="Fronick C."/>
            <person name="Minx P."/>
            <person name="Kyung K."/>
            <person name="Warren W."/>
            <person name="Fulton R."/>
            <person name="Feng D."/>
            <person name="Wollam A."/>
            <person name="Shah N."/>
            <person name="Bhonagiri V."/>
            <person name="Nash W.E."/>
            <person name="Hallsworth-Pepin K."/>
            <person name="Wilson R.K."/>
            <person name="McClelland M."/>
            <person name="Forsythe S.J."/>
        </authorList>
    </citation>
    <scope>NUCLEOTIDE SEQUENCE [LARGE SCALE GENOMIC DNA]</scope>
    <source>
        <strain>ATCC BAA-894</strain>
    </source>
</reference>
<protein>
    <recommendedName>
        <fullName evidence="1">Outer-membrane lipoprotein carrier protein</fullName>
    </recommendedName>
</protein>
<organism>
    <name type="scientific">Cronobacter sakazakii (strain ATCC BAA-894)</name>
    <name type="common">Enterobacter sakazakii</name>
    <dbReference type="NCBI Taxonomy" id="290339"/>
    <lineage>
        <taxon>Bacteria</taxon>
        <taxon>Pseudomonadati</taxon>
        <taxon>Pseudomonadota</taxon>
        <taxon>Gammaproteobacteria</taxon>
        <taxon>Enterobacterales</taxon>
        <taxon>Enterobacteriaceae</taxon>
        <taxon>Cronobacter</taxon>
    </lineage>
</organism>
<proteinExistence type="inferred from homology"/>
<sequence>MKKIAVTCALLSAFAVSSVWADAAGDLKSRLDKVSSFHASFTQKVTDGSGAAVQEGQGDLWVKRPNLFNWHMTQPDESVLISDGKTLWFYNPFVEQASATWLKDATSNTPFMLIARNQSSDWQQYNIKQNGDDFVLTPKSASGNLKQFTINVSRDGTINQFSAVEQDDQRSSYQLKSQQNGAVDMSKFTFTPPQGVTVDDQRNK</sequence>
<gene>
    <name evidence="1" type="primary">lolA</name>
    <name type="ordered locus">ESA_02448</name>
</gene>
<comment type="function">
    <text evidence="1">Participates in the translocation of lipoproteins from the inner membrane to the outer membrane. Only forms a complex with a lipoprotein if the residue after the N-terminal Cys is not an aspartate (The Asp acts as a targeting signal to indicate that the lipoprotein should stay in the inner membrane).</text>
</comment>
<comment type="subunit">
    <text evidence="1">Monomer.</text>
</comment>
<comment type="subcellular location">
    <subcellularLocation>
        <location evidence="1">Periplasm</location>
    </subcellularLocation>
</comment>
<comment type="similarity">
    <text evidence="1">Belongs to the LolA family.</text>
</comment>
<name>LOLA_CROS8</name>
<evidence type="ECO:0000255" key="1">
    <source>
        <dbReference type="HAMAP-Rule" id="MF_00240"/>
    </source>
</evidence>
<evidence type="ECO:0000256" key="2">
    <source>
        <dbReference type="SAM" id="MobiDB-lite"/>
    </source>
</evidence>
<feature type="signal peptide" evidence="1">
    <location>
        <begin position="1"/>
        <end position="21"/>
    </location>
</feature>
<feature type="chain" id="PRO_1000005689" description="Outer-membrane lipoprotein carrier protein">
    <location>
        <begin position="22"/>
        <end position="204"/>
    </location>
</feature>
<feature type="region of interest" description="Disordered" evidence="2">
    <location>
        <begin position="169"/>
        <end position="204"/>
    </location>
</feature>
<feature type="compositionally biased region" description="Polar residues" evidence="2">
    <location>
        <begin position="171"/>
        <end position="181"/>
    </location>
</feature>
<keyword id="KW-0143">Chaperone</keyword>
<keyword id="KW-0574">Periplasm</keyword>
<keyword id="KW-0653">Protein transport</keyword>
<keyword id="KW-1185">Reference proteome</keyword>
<keyword id="KW-0732">Signal</keyword>
<keyword id="KW-0813">Transport</keyword>
<dbReference type="EMBL" id="CP000783">
    <property type="protein sequence ID" value="ABU77694.1"/>
    <property type="molecule type" value="Genomic_DNA"/>
</dbReference>
<dbReference type="RefSeq" id="WP_004387365.1">
    <property type="nucleotide sequence ID" value="NC_009778.1"/>
</dbReference>
<dbReference type="SMR" id="A7MER9"/>
<dbReference type="GeneID" id="45716126"/>
<dbReference type="KEGG" id="esa:ESA_02448"/>
<dbReference type="HOGENOM" id="CLU_087560_1_1_6"/>
<dbReference type="Proteomes" id="UP000000260">
    <property type="component" value="Chromosome"/>
</dbReference>
<dbReference type="GO" id="GO:0030288">
    <property type="term" value="C:outer membrane-bounded periplasmic space"/>
    <property type="evidence" value="ECO:0007669"/>
    <property type="project" value="TreeGrafter"/>
</dbReference>
<dbReference type="GO" id="GO:0044874">
    <property type="term" value="P:lipoprotein localization to outer membrane"/>
    <property type="evidence" value="ECO:0007669"/>
    <property type="project" value="UniProtKB-UniRule"/>
</dbReference>
<dbReference type="GO" id="GO:0042953">
    <property type="term" value="P:lipoprotein transport"/>
    <property type="evidence" value="ECO:0007669"/>
    <property type="project" value="InterPro"/>
</dbReference>
<dbReference type="CDD" id="cd16325">
    <property type="entry name" value="LolA"/>
    <property type="match status" value="1"/>
</dbReference>
<dbReference type="FunFam" id="2.50.20.10:FF:000001">
    <property type="entry name" value="Outer-membrane lipoprotein carrier protein"/>
    <property type="match status" value="1"/>
</dbReference>
<dbReference type="Gene3D" id="2.50.20.10">
    <property type="entry name" value="Lipoprotein localisation LolA/LolB/LppX"/>
    <property type="match status" value="1"/>
</dbReference>
<dbReference type="HAMAP" id="MF_00240">
    <property type="entry name" value="LolA"/>
    <property type="match status" value="1"/>
</dbReference>
<dbReference type="InterPro" id="IPR029046">
    <property type="entry name" value="LolA/LolB/LppX"/>
</dbReference>
<dbReference type="InterPro" id="IPR004564">
    <property type="entry name" value="OM_lipoprot_carrier_LolA-like"/>
</dbReference>
<dbReference type="InterPro" id="IPR018323">
    <property type="entry name" value="OM_lipoprot_carrier_LolA_Pbac"/>
</dbReference>
<dbReference type="NCBIfam" id="TIGR00547">
    <property type="entry name" value="lolA"/>
    <property type="match status" value="1"/>
</dbReference>
<dbReference type="PANTHER" id="PTHR35869">
    <property type="entry name" value="OUTER-MEMBRANE LIPOPROTEIN CARRIER PROTEIN"/>
    <property type="match status" value="1"/>
</dbReference>
<dbReference type="PANTHER" id="PTHR35869:SF1">
    <property type="entry name" value="OUTER-MEMBRANE LIPOPROTEIN CARRIER PROTEIN"/>
    <property type="match status" value="1"/>
</dbReference>
<dbReference type="Pfam" id="PF03548">
    <property type="entry name" value="LolA"/>
    <property type="match status" value="1"/>
</dbReference>
<dbReference type="SUPFAM" id="SSF89392">
    <property type="entry name" value="Prokaryotic lipoproteins and lipoprotein localization factors"/>
    <property type="match status" value="1"/>
</dbReference>
<accession>A7MER9</accession>